<reference key="1">
    <citation type="submission" date="2005-03" db="EMBL/GenBank/DDBJ databases">
        <title>Brevibacillus brevis strain 47, complete genome.</title>
        <authorList>
            <person name="Hosoyama A."/>
            <person name="Yamada R."/>
            <person name="Hongo Y."/>
            <person name="Terui Y."/>
            <person name="Ankai A."/>
            <person name="Masuyama W."/>
            <person name="Sekiguchi M."/>
            <person name="Takeda T."/>
            <person name="Asano K."/>
            <person name="Ohji S."/>
            <person name="Ichikawa N."/>
            <person name="Narita S."/>
            <person name="Aoki N."/>
            <person name="Miura H."/>
            <person name="Matsushita S."/>
            <person name="Sekigawa T."/>
            <person name="Yamagata H."/>
            <person name="Yoshikawa H."/>
            <person name="Udaka S."/>
            <person name="Tanikawa S."/>
            <person name="Fujita N."/>
        </authorList>
    </citation>
    <scope>NUCLEOTIDE SEQUENCE [LARGE SCALE GENOMIC DNA]</scope>
    <source>
        <strain>47 / JCM 6285 / NBRC 100599</strain>
    </source>
</reference>
<evidence type="ECO:0000255" key="1">
    <source>
        <dbReference type="HAMAP-Rule" id="MF_00207"/>
    </source>
</evidence>
<accession>C0ZGL2</accession>
<comment type="catalytic activity">
    <reaction evidence="1">
        <text>diphosphate + H2O = 2 phosphate + H(+)</text>
        <dbReference type="Rhea" id="RHEA:24576"/>
        <dbReference type="ChEBI" id="CHEBI:15377"/>
        <dbReference type="ChEBI" id="CHEBI:15378"/>
        <dbReference type="ChEBI" id="CHEBI:33019"/>
        <dbReference type="ChEBI" id="CHEBI:43474"/>
        <dbReference type="EC" id="3.6.1.1"/>
    </reaction>
</comment>
<comment type="cofactor">
    <cofactor evidence="1">
        <name>Mn(2+)</name>
        <dbReference type="ChEBI" id="CHEBI:29035"/>
    </cofactor>
    <text evidence="1">Binds 2 manganese ions per subunit.</text>
</comment>
<comment type="subcellular location">
    <subcellularLocation>
        <location evidence="1">Cytoplasm</location>
    </subcellularLocation>
</comment>
<comment type="similarity">
    <text evidence="1">Belongs to the PPase class C family.</text>
</comment>
<protein>
    <recommendedName>
        <fullName evidence="1">Probable manganese-dependent inorganic pyrophosphatase</fullName>
        <ecNumber evidence="1">3.6.1.1</ecNumber>
    </recommendedName>
    <alternativeName>
        <fullName evidence="1">Pyrophosphate phospho-hydrolase</fullName>
        <shortName evidence="1">PPase</shortName>
    </alternativeName>
</protein>
<feature type="chain" id="PRO_1000124655" description="Probable manganese-dependent inorganic pyrophosphatase">
    <location>
        <begin position="1"/>
        <end position="310"/>
    </location>
</feature>
<feature type="binding site" evidence="1">
    <location>
        <position position="9"/>
    </location>
    <ligand>
        <name>Mn(2+)</name>
        <dbReference type="ChEBI" id="CHEBI:29035"/>
        <label>1</label>
    </ligand>
</feature>
<feature type="binding site" evidence="1">
    <location>
        <position position="13"/>
    </location>
    <ligand>
        <name>Mn(2+)</name>
        <dbReference type="ChEBI" id="CHEBI:29035"/>
        <label>1</label>
    </ligand>
</feature>
<feature type="binding site" evidence="1">
    <location>
        <position position="15"/>
    </location>
    <ligand>
        <name>Mn(2+)</name>
        <dbReference type="ChEBI" id="CHEBI:29035"/>
        <label>2</label>
    </ligand>
</feature>
<feature type="binding site" evidence="1">
    <location>
        <position position="75"/>
    </location>
    <ligand>
        <name>Mn(2+)</name>
        <dbReference type="ChEBI" id="CHEBI:29035"/>
        <label>1</label>
    </ligand>
</feature>
<feature type="binding site" evidence="1">
    <location>
        <position position="75"/>
    </location>
    <ligand>
        <name>Mn(2+)</name>
        <dbReference type="ChEBI" id="CHEBI:29035"/>
        <label>2</label>
    </ligand>
</feature>
<feature type="binding site" evidence="1">
    <location>
        <position position="97"/>
    </location>
    <ligand>
        <name>Mn(2+)</name>
        <dbReference type="ChEBI" id="CHEBI:29035"/>
        <label>2</label>
    </ligand>
</feature>
<feature type="binding site" evidence="1">
    <location>
        <position position="149"/>
    </location>
    <ligand>
        <name>Mn(2+)</name>
        <dbReference type="ChEBI" id="CHEBI:29035"/>
        <label>2</label>
    </ligand>
</feature>
<organism>
    <name type="scientific">Brevibacillus brevis (strain 47 / JCM 6285 / NBRC 100599)</name>
    <dbReference type="NCBI Taxonomy" id="358681"/>
    <lineage>
        <taxon>Bacteria</taxon>
        <taxon>Bacillati</taxon>
        <taxon>Bacillota</taxon>
        <taxon>Bacilli</taxon>
        <taxon>Bacillales</taxon>
        <taxon>Paenibacillaceae</taxon>
        <taxon>Brevibacillus</taxon>
    </lineage>
</organism>
<sequence length="310" mass="33783">MEKKLIFGHKNPDTDSICSALVYADLKTKLGANVEPVRLGVISSETAFVLNYFQVKEPRLVETVANEVNEVILVDHNERQQSANDIEQVQVVEVIDHHRIANFETSNPLYFRAEPVGCTTTILKKMYKENGVDIPKEMAGLMLSAIISDTLLLKSPTCTEQDVAAAHELAEIAGVNLEAYGLDMLKAGADLSDKTIEQLLTLDAKEFQMGNAKVEIAQVNAVDVNDVLARQGELEAAMNASIAEKALDLFVFVVTDILNNDSVAIALGSATQAVEKAYQVTLVDNKAVLKGVVSRKKQIVPVLTDTFQAL</sequence>
<keyword id="KW-0963">Cytoplasm</keyword>
<keyword id="KW-0378">Hydrolase</keyword>
<keyword id="KW-0464">Manganese</keyword>
<keyword id="KW-0479">Metal-binding</keyword>
<keyword id="KW-1185">Reference proteome</keyword>
<gene>
    <name evidence="1" type="primary">ppaC</name>
    <name type="ordered locus">BBR47_39440</name>
</gene>
<proteinExistence type="inferred from homology"/>
<name>PPAC_BREBN</name>
<dbReference type="EC" id="3.6.1.1" evidence="1"/>
<dbReference type="EMBL" id="AP008955">
    <property type="protein sequence ID" value="BAH44921.1"/>
    <property type="molecule type" value="Genomic_DNA"/>
</dbReference>
<dbReference type="RefSeq" id="WP_015892198.1">
    <property type="nucleotide sequence ID" value="NC_012491.1"/>
</dbReference>
<dbReference type="SMR" id="C0ZGL2"/>
<dbReference type="STRING" id="358681.BBR47_39440"/>
<dbReference type="KEGG" id="bbe:BBR47_39440"/>
<dbReference type="eggNOG" id="COG1227">
    <property type="taxonomic scope" value="Bacteria"/>
</dbReference>
<dbReference type="HOGENOM" id="CLU_025243_0_1_9"/>
<dbReference type="Proteomes" id="UP000001877">
    <property type="component" value="Chromosome"/>
</dbReference>
<dbReference type="GO" id="GO:0005737">
    <property type="term" value="C:cytoplasm"/>
    <property type="evidence" value="ECO:0007669"/>
    <property type="project" value="UniProtKB-SubCell"/>
</dbReference>
<dbReference type="GO" id="GO:0004427">
    <property type="term" value="F:inorganic diphosphate phosphatase activity"/>
    <property type="evidence" value="ECO:0007669"/>
    <property type="project" value="UniProtKB-UniRule"/>
</dbReference>
<dbReference type="GO" id="GO:0030145">
    <property type="term" value="F:manganese ion binding"/>
    <property type="evidence" value="ECO:0007669"/>
    <property type="project" value="UniProtKB-UniRule"/>
</dbReference>
<dbReference type="FunFam" id="3.10.310.20:FF:000001">
    <property type="entry name" value="Probable manganese-dependent inorganic pyrophosphatase"/>
    <property type="match status" value="1"/>
</dbReference>
<dbReference type="FunFam" id="3.90.1640.10:FF:000001">
    <property type="entry name" value="Probable manganese-dependent inorganic pyrophosphatase"/>
    <property type="match status" value="1"/>
</dbReference>
<dbReference type="Gene3D" id="3.10.310.20">
    <property type="entry name" value="DHHA2 domain"/>
    <property type="match status" value="1"/>
</dbReference>
<dbReference type="Gene3D" id="3.90.1640.10">
    <property type="entry name" value="inorganic pyrophosphatase (n-terminal core)"/>
    <property type="match status" value="1"/>
</dbReference>
<dbReference type="HAMAP" id="MF_00207">
    <property type="entry name" value="PPase_C"/>
    <property type="match status" value="1"/>
</dbReference>
<dbReference type="InterPro" id="IPR001667">
    <property type="entry name" value="DDH_dom"/>
</dbReference>
<dbReference type="InterPro" id="IPR038763">
    <property type="entry name" value="DHH_sf"/>
</dbReference>
<dbReference type="InterPro" id="IPR004097">
    <property type="entry name" value="DHHA2"/>
</dbReference>
<dbReference type="InterPro" id="IPR038222">
    <property type="entry name" value="DHHA2_dom_sf"/>
</dbReference>
<dbReference type="InterPro" id="IPR022934">
    <property type="entry name" value="Mn-dep_inorganic_PyrPase"/>
</dbReference>
<dbReference type="NCBIfam" id="NF003877">
    <property type="entry name" value="PRK05427.1"/>
    <property type="match status" value="1"/>
</dbReference>
<dbReference type="PANTHER" id="PTHR12112">
    <property type="entry name" value="BNIP - RELATED"/>
    <property type="match status" value="1"/>
</dbReference>
<dbReference type="PANTHER" id="PTHR12112:SF22">
    <property type="entry name" value="MANGANESE-DEPENDENT INORGANIC PYROPHOSPHATASE-RELATED"/>
    <property type="match status" value="1"/>
</dbReference>
<dbReference type="Pfam" id="PF01368">
    <property type="entry name" value="DHH"/>
    <property type="match status" value="1"/>
</dbReference>
<dbReference type="Pfam" id="PF02833">
    <property type="entry name" value="DHHA2"/>
    <property type="match status" value="1"/>
</dbReference>
<dbReference type="SMART" id="SM01131">
    <property type="entry name" value="DHHA2"/>
    <property type="match status" value="1"/>
</dbReference>
<dbReference type="SUPFAM" id="SSF64182">
    <property type="entry name" value="DHH phosphoesterases"/>
    <property type="match status" value="1"/>
</dbReference>